<proteinExistence type="inferred from homology"/>
<organism>
    <name type="scientific">Rhodopseudomonas palustris (strain BisB18)</name>
    <dbReference type="NCBI Taxonomy" id="316056"/>
    <lineage>
        <taxon>Bacteria</taxon>
        <taxon>Pseudomonadati</taxon>
        <taxon>Pseudomonadota</taxon>
        <taxon>Alphaproteobacteria</taxon>
        <taxon>Hyphomicrobiales</taxon>
        <taxon>Nitrobacteraceae</taxon>
        <taxon>Rhodopseudomonas</taxon>
    </lineage>
</organism>
<dbReference type="EC" id="2.7.7.-" evidence="1"/>
<dbReference type="EC" id="2.7.7.108" evidence="1"/>
<dbReference type="EMBL" id="CP000301">
    <property type="protein sequence ID" value="ABD87888.1"/>
    <property type="molecule type" value="Genomic_DNA"/>
</dbReference>
<dbReference type="SMR" id="Q215P8"/>
<dbReference type="STRING" id="316056.RPC_2335"/>
<dbReference type="KEGG" id="rpc:RPC_2335"/>
<dbReference type="eggNOG" id="COG0397">
    <property type="taxonomic scope" value="Bacteria"/>
</dbReference>
<dbReference type="HOGENOM" id="CLU_010245_4_1_5"/>
<dbReference type="OrthoDB" id="9776281at2"/>
<dbReference type="GO" id="GO:0070733">
    <property type="term" value="F:AMPylase activity"/>
    <property type="evidence" value="ECO:0007669"/>
    <property type="project" value="RHEA"/>
</dbReference>
<dbReference type="GO" id="GO:0005524">
    <property type="term" value="F:ATP binding"/>
    <property type="evidence" value="ECO:0007669"/>
    <property type="project" value="UniProtKB-UniRule"/>
</dbReference>
<dbReference type="GO" id="GO:0000287">
    <property type="term" value="F:magnesium ion binding"/>
    <property type="evidence" value="ECO:0007669"/>
    <property type="project" value="UniProtKB-UniRule"/>
</dbReference>
<dbReference type="HAMAP" id="MF_00692">
    <property type="entry name" value="YdiU_SelO"/>
    <property type="match status" value="1"/>
</dbReference>
<dbReference type="InterPro" id="IPR003846">
    <property type="entry name" value="SelO"/>
</dbReference>
<dbReference type="NCBIfam" id="NF000658">
    <property type="entry name" value="PRK00029.1"/>
    <property type="match status" value="1"/>
</dbReference>
<dbReference type="PANTHER" id="PTHR32057">
    <property type="entry name" value="PROTEIN ADENYLYLTRANSFERASE SELO, MITOCHONDRIAL"/>
    <property type="match status" value="1"/>
</dbReference>
<dbReference type="PANTHER" id="PTHR32057:SF14">
    <property type="entry name" value="PROTEIN ADENYLYLTRANSFERASE SELO, MITOCHONDRIAL"/>
    <property type="match status" value="1"/>
</dbReference>
<dbReference type="Pfam" id="PF02696">
    <property type="entry name" value="SelO"/>
    <property type="match status" value="1"/>
</dbReference>
<protein>
    <recommendedName>
        <fullName evidence="1">Protein nucleotidyltransferase YdiU</fullName>
        <ecNumber evidence="1">2.7.7.-</ecNumber>
    </recommendedName>
    <alternativeName>
        <fullName evidence="1">Protein adenylyltransferase YdiU</fullName>
        <ecNumber evidence="1">2.7.7.108</ecNumber>
    </alternativeName>
    <alternativeName>
        <fullName evidence="1">Protein uridylyltransferase YdiU</fullName>
        <ecNumber evidence="1">2.7.7.-</ecNumber>
    </alternativeName>
</protein>
<feature type="chain" id="PRO_0000271858" description="Protein nucleotidyltransferase YdiU">
    <location>
        <begin position="1"/>
        <end position="491"/>
    </location>
</feature>
<feature type="active site" description="Proton acceptor" evidence="1">
    <location>
        <position position="250"/>
    </location>
</feature>
<feature type="binding site" evidence="1">
    <location>
        <position position="88"/>
    </location>
    <ligand>
        <name>ATP</name>
        <dbReference type="ChEBI" id="CHEBI:30616"/>
    </ligand>
</feature>
<feature type="binding site" evidence="1">
    <location>
        <position position="90"/>
    </location>
    <ligand>
        <name>ATP</name>
        <dbReference type="ChEBI" id="CHEBI:30616"/>
    </ligand>
</feature>
<feature type="binding site" evidence="1">
    <location>
        <position position="91"/>
    </location>
    <ligand>
        <name>ATP</name>
        <dbReference type="ChEBI" id="CHEBI:30616"/>
    </ligand>
</feature>
<feature type="binding site" evidence="1">
    <location>
        <position position="111"/>
    </location>
    <ligand>
        <name>ATP</name>
        <dbReference type="ChEBI" id="CHEBI:30616"/>
    </ligand>
</feature>
<feature type="binding site" evidence="1">
    <location>
        <position position="123"/>
    </location>
    <ligand>
        <name>ATP</name>
        <dbReference type="ChEBI" id="CHEBI:30616"/>
    </ligand>
</feature>
<feature type="binding site" evidence="1">
    <location>
        <position position="124"/>
    </location>
    <ligand>
        <name>ATP</name>
        <dbReference type="ChEBI" id="CHEBI:30616"/>
    </ligand>
</feature>
<feature type="binding site" evidence="1">
    <location>
        <position position="174"/>
    </location>
    <ligand>
        <name>ATP</name>
        <dbReference type="ChEBI" id="CHEBI:30616"/>
    </ligand>
</feature>
<feature type="binding site" evidence="1">
    <location>
        <position position="181"/>
    </location>
    <ligand>
        <name>ATP</name>
        <dbReference type="ChEBI" id="CHEBI:30616"/>
    </ligand>
</feature>
<feature type="binding site" evidence="1">
    <location>
        <position position="251"/>
    </location>
    <ligand>
        <name>Mg(2+)</name>
        <dbReference type="ChEBI" id="CHEBI:18420"/>
    </ligand>
</feature>
<feature type="binding site" evidence="1">
    <location>
        <position position="260"/>
    </location>
    <ligand>
        <name>ATP</name>
        <dbReference type="ChEBI" id="CHEBI:30616"/>
    </ligand>
</feature>
<feature type="binding site" evidence="1">
    <location>
        <position position="260"/>
    </location>
    <ligand>
        <name>Mg(2+)</name>
        <dbReference type="ChEBI" id="CHEBI:18420"/>
    </ligand>
</feature>
<sequence length="491" mass="53492">MAVHFPFDNSYAALPEGFFARVAPTPVATPRLIKLNRPLARELGLDPDRLDSPEGAEILAGKRIPEGADPIAMAYAGHQFGNFVPQLGDGRAILLGEVIDQNGVRRDIQLKGSGPTPYSRRGDGRAALGPVLREYIVSEAMAALDIPTTRSLAAVITGETVARETLLPGAVLTRIATSHIRVGTFQFFAARRNQDAVKALADHVIARHYPNAINTKQPYLTLLQEVIRRQAELVARWLLVGFIHGVMNTDNCSVAGETIDYGPCAFMDGYDPTKVFSSIDHTGRYAYGNQPRIALWNLTRLAECLVPLISDDQDAAIADAEAALGQFSEQFGQAYHAGLRAKLGLFTAQDGDRELIGDLLGAMIEQAADFTLTFRGLSDLAGNAETDSVRNLFAEPAAFDGWLGRWRQRTAAEPQDAATRRAAMQAVNPAFIPRNHRIQAVIEAAVERDDFAPFEELLAVLAHPYRDQPGFAGYAQPPQPHEQVLQTFCGT</sequence>
<keyword id="KW-0067">ATP-binding</keyword>
<keyword id="KW-0460">Magnesium</keyword>
<keyword id="KW-0464">Manganese</keyword>
<keyword id="KW-0479">Metal-binding</keyword>
<keyword id="KW-0547">Nucleotide-binding</keyword>
<keyword id="KW-0548">Nucleotidyltransferase</keyword>
<keyword id="KW-0808">Transferase</keyword>
<reference key="1">
    <citation type="submission" date="2006-03" db="EMBL/GenBank/DDBJ databases">
        <title>Complete sequence of Rhodopseudomonas palustris BisB18.</title>
        <authorList>
            <consortium name="US DOE Joint Genome Institute"/>
            <person name="Copeland A."/>
            <person name="Lucas S."/>
            <person name="Lapidus A."/>
            <person name="Barry K."/>
            <person name="Detter J.C."/>
            <person name="Glavina del Rio T."/>
            <person name="Hammon N."/>
            <person name="Israni S."/>
            <person name="Dalin E."/>
            <person name="Tice H."/>
            <person name="Pitluck S."/>
            <person name="Chain P."/>
            <person name="Malfatti S."/>
            <person name="Shin M."/>
            <person name="Vergez L."/>
            <person name="Schmutz J."/>
            <person name="Larimer F."/>
            <person name="Land M."/>
            <person name="Hauser L."/>
            <person name="Pelletier D.A."/>
            <person name="Kyrpides N."/>
            <person name="Anderson I."/>
            <person name="Oda Y."/>
            <person name="Harwood C.S."/>
            <person name="Richardson P."/>
        </authorList>
    </citation>
    <scope>NUCLEOTIDE SEQUENCE [LARGE SCALE GENOMIC DNA]</scope>
    <source>
        <strain>BisB18</strain>
    </source>
</reference>
<evidence type="ECO:0000255" key="1">
    <source>
        <dbReference type="HAMAP-Rule" id="MF_00692"/>
    </source>
</evidence>
<accession>Q215P8</accession>
<comment type="function">
    <text evidence="1">Nucleotidyltransferase involved in the post-translational modification of proteins. It can catalyze the addition of adenosine monophosphate (AMP) or uridine monophosphate (UMP) to a protein, resulting in modifications known as AMPylation and UMPylation.</text>
</comment>
<comment type="catalytic activity">
    <reaction evidence="1">
        <text>L-seryl-[protein] + ATP = 3-O-(5'-adenylyl)-L-seryl-[protein] + diphosphate</text>
        <dbReference type="Rhea" id="RHEA:58120"/>
        <dbReference type="Rhea" id="RHEA-COMP:9863"/>
        <dbReference type="Rhea" id="RHEA-COMP:15073"/>
        <dbReference type="ChEBI" id="CHEBI:29999"/>
        <dbReference type="ChEBI" id="CHEBI:30616"/>
        <dbReference type="ChEBI" id="CHEBI:33019"/>
        <dbReference type="ChEBI" id="CHEBI:142516"/>
        <dbReference type="EC" id="2.7.7.108"/>
    </reaction>
</comment>
<comment type="catalytic activity">
    <reaction evidence="1">
        <text>L-threonyl-[protein] + ATP = 3-O-(5'-adenylyl)-L-threonyl-[protein] + diphosphate</text>
        <dbReference type="Rhea" id="RHEA:54292"/>
        <dbReference type="Rhea" id="RHEA-COMP:11060"/>
        <dbReference type="Rhea" id="RHEA-COMP:13847"/>
        <dbReference type="ChEBI" id="CHEBI:30013"/>
        <dbReference type="ChEBI" id="CHEBI:30616"/>
        <dbReference type="ChEBI" id="CHEBI:33019"/>
        <dbReference type="ChEBI" id="CHEBI:138113"/>
        <dbReference type="EC" id="2.7.7.108"/>
    </reaction>
</comment>
<comment type="catalytic activity">
    <reaction evidence="1">
        <text>L-tyrosyl-[protein] + ATP = O-(5'-adenylyl)-L-tyrosyl-[protein] + diphosphate</text>
        <dbReference type="Rhea" id="RHEA:54288"/>
        <dbReference type="Rhea" id="RHEA-COMP:10136"/>
        <dbReference type="Rhea" id="RHEA-COMP:13846"/>
        <dbReference type="ChEBI" id="CHEBI:30616"/>
        <dbReference type="ChEBI" id="CHEBI:33019"/>
        <dbReference type="ChEBI" id="CHEBI:46858"/>
        <dbReference type="ChEBI" id="CHEBI:83624"/>
        <dbReference type="EC" id="2.7.7.108"/>
    </reaction>
</comment>
<comment type="catalytic activity">
    <reaction evidence="1">
        <text>L-histidyl-[protein] + UTP = N(tele)-(5'-uridylyl)-L-histidyl-[protein] + diphosphate</text>
        <dbReference type="Rhea" id="RHEA:83891"/>
        <dbReference type="Rhea" id="RHEA-COMP:9745"/>
        <dbReference type="Rhea" id="RHEA-COMP:20239"/>
        <dbReference type="ChEBI" id="CHEBI:29979"/>
        <dbReference type="ChEBI" id="CHEBI:33019"/>
        <dbReference type="ChEBI" id="CHEBI:46398"/>
        <dbReference type="ChEBI" id="CHEBI:233474"/>
    </reaction>
</comment>
<comment type="catalytic activity">
    <reaction evidence="1">
        <text>L-seryl-[protein] + UTP = O-(5'-uridylyl)-L-seryl-[protein] + diphosphate</text>
        <dbReference type="Rhea" id="RHEA:64604"/>
        <dbReference type="Rhea" id="RHEA-COMP:9863"/>
        <dbReference type="Rhea" id="RHEA-COMP:16635"/>
        <dbReference type="ChEBI" id="CHEBI:29999"/>
        <dbReference type="ChEBI" id="CHEBI:33019"/>
        <dbReference type="ChEBI" id="CHEBI:46398"/>
        <dbReference type="ChEBI" id="CHEBI:156051"/>
    </reaction>
</comment>
<comment type="catalytic activity">
    <reaction evidence="1">
        <text>L-tyrosyl-[protein] + UTP = O-(5'-uridylyl)-L-tyrosyl-[protein] + diphosphate</text>
        <dbReference type="Rhea" id="RHEA:83887"/>
        <dbReference type="Rhea" id="RHEA-COMP:10136"/>
        <dbReference type="Rhea" id="RHEA-COMP:20238"/>
        <dbReference type="ChEBI" id="CHEBI:33019"/>
        <dbReference type="ChEBI" id="CHEBI:46398"/>
        <dbReference type="ChEBI" id="CHEBI:46858"/>
        <dbReference type="ChEBI" id="CHEBI:90602"/>
    </reaction>
</comment>
<comment type="cofactor">
    <cofactor evidence="1">
        <name>Mg(2+)</name>
        <dbReference type="ChEBI" id="CHEBI:18420"/>
    </cofactor>
    <cofactor evidence="1">
        <name>Mn(2+)</name>
        <dbReference type="ChEBI" id="CHEBI:29035"/>
    </cofactor>
</comment>
<comment type="similarity">
    <text evidence="1">Belongs to the SELO family.</text>
</comment>
<gene>
    <name evidence="1" type="primary">ydiU</name>
    <name evidence="1" type="synonym">selO</name>
    <name type="ordered locus">RPC_2335</name>
</gene>
<name>SELO_RHOPB</name>